<accession>P40063</accession>
<accession>D3DM11</accession>
<sequence length="208" mass="24413">MYSNHNLNSDDCCFDWNEEKAAELQRTGVSFDRSLTPQSLRTSTRRLSEENKQQSGTMHIDTSPSVVSDIISSRRDRSQDFFGPHSSSPIAPSERQRADQRSRLESMRLTRRRDKMTKVRGGLEKMEEMIMQGEHLREMQRLKQEAQKNALPSDMAEYMEWQNNEDLEDDELLAFIEKQETYKNELEHFLNNANKNVYENNSYPNSHT</sequence>
<proteinExistence type="evidence at protein level"/>
<organism>
    <name type="scientific">Saccharomyces cerevisiae (strain ATCC 204508 / S288c)</name>
    <name type="common">Baker's yeast</name>
    <dbReference type="NCBI Taxonomy" id="559292"/>
    <lineage>
        <taxon>Eukaryota</taxon>
        <taxon>Fungi</taxon>
        <taxon>Dikarya</taxon>
        <taxon>Ascomycota</taxon>
        <taxon>Saccharomycotina</taxon>
        <taxon>Saccharomycetes</taxon>
        <taxon>Saccharomycetales</taxon>
        <taxon>Saccharomycetaceae</taxon>
        <taxon>Saccharomyces</taxon>
    </lineage>
</organism>
<comment type="function">
    <text evidence="2">Involved in regulation of Ty1 transposition. Inhibits Ty1 transposition at a post-transcriptional and pre-integrational stage of the Ty1 retrotransposition cycle.</text>
</comment>
<comment type="subcellular location">
    <subcellularLocation>
        <location evidence="3">Cytoplasm</location>
    </subcellularLocation>
    <subcellularLocation>
        <location evidence="3">Nucleus</location>
    </subcellularLocation>
</comment>
<comment type="miscellaneous">
    <text evidence="4">Present with 259 molecules/cell in log phase SD medium.</text>
</comment>
<protein>
    <recommendedName>
        <fullName>Regulator of Ty1 transposition protein 105</fullName>
    </recommendedName>
</protein>
<dbReference type="EMBL" id="U18839">
    <property type="protein sequence ID" value="AAB64659.1"/>
    <property type="molecule type" value="Genomic_DNA"/>
</dbReference>
<dbReference type="EMBL" id="AY692872">
    <property type="protein sequence ID" value="AAT92891.1"/>
    <property type="molecule type" value="Genomic_DNA"/>
</dbReference>
<dbReference type="EMBL" id="BK006939">
    <property type="protein sequence ID" value="DAA07765.1"/>
    <property type="molecule type" value="Genomic_DNA"/>
</dbReference>
<dbReference type="PIR" id="S50607">
    <property type="entry name" value="S50607"/>
</dbReference>
<dbReference type="RefSeq" id="NP_011030.3">
    <property type="nucleotide sequence ID" value="NM_001178995.3"/>
</dbReference>
<dbReference type="SMR" id="P40063"/>
<dbReference type="BioGRID" id="36850">
    <property type="interactions" value="42"/>
</dbReference>
<dbReference type="DIP" id="DIP-2766N"/>
<dbReference type="FunCoup" id="P40063">
    <property type="interactions" value="33"/>
</dbReference>
<dbReference type="IntAct" id="P40063">
    <property type="interactions" value="4"/>
</dbReference>
<dbReference type="MINT" id="P40063"/>
<dbReference type="STRING" id="4932.YER104W"/>
<dbReference type="iPTMnet" id="P40063"/>
<dbReference type="PaxDb" id="4932-YER104W"/>
<dbReference type="PeptideAtlas" id="P40063"/>
<dbReference type="EnsemblFungi" id="YER104W_mRNA">
    <property type="protein sequence ID" value="YER104W"/>
    <property type="gene ID" value="YER104W"/>
</dbReference>
<dbReference type="GeneID" id="856841"/>
<dbReference type="KEGG" id="sce:YER104W"/>
<dbReference type="AGR" id="SGD:S000000906"/>
<dbReference type="SGD" id="S000000906">
    <property type="gene designation" value="RTT105"/>
</dbReference>
<dbReference type="VEuPathDB" id="FungiDB:YER104W"/>
<dbReference type="eggNOG" id="ENOG502S9AV">
    <property type="taxonomic scope" value="Eukaryota"/>
</dbReference>
<dbReference type="HOGENOM" id="CLU_1469340_0_0_1"/>
<dbReference type="InParanoid" id="P40063"/>
<dbReference type="OMA" id="MESERSH"/>
<dbReference type="OrthoDB" id="4052750at2759"/>
<dbReference type="BioCyc" id="YEAST:G3O-30269-MONOMER"/>
<dbReference type="BioGRID-ORCS" id="856841">
    <property type="hits" value="0 hits in 10 CRISPR screens"/>
</dbReference>
<dbReference type="PRO" id="PR:P40063"/>
<dbReference type="Proteomes" id="UP000002311">
    <property type="component" value="Chromosome V"/>
</dbReference>
<dbReference type="RNAct" id="P40063">
    <property type="molecule type" value="protein"/>
</dbReference>
<dbReference type="GO" id="GO:0005737">
    <property type="term" value="C:cytoplasm"/>
    <property type="evidence" value="ECO:0007005"/>
    <property type="project" value="SGD"/>
</dbReference>
<dbReference type="GO" id="GO:0005634">
    <property type="term" value="C:nucleus"/>
    <property type="evidence" value="ECO:0007005"/>
    <property type="project" value="SGD"/>
</dbReference>
<dbReference type="GO" id="GO:0061608">
    <property type="term" value="F:nuclear import signal receptor activity"/>
    <property type="evidence" value="ECO:0000314"/>
    <property type="project" value="SGD"/>
</dbReference>
<dbReference type="GO" id="GO:0140597">
    <property type="term" value="F:protein carrier chaperone"/>
    <property type="evidence" value="ECO:0000314"/>
    <property type="project" value="SGD"/>
</dbReference>
<dbReference type="GO" id="GO:0000727">
    <property type="term" value="P:double-strand break repair via break-induced replication"/>
    <property type="evidence" value="ECO:0000315"/>
    <property type="project" value="SGD"/>
</dbReference>
<dbReference type="GO" id="GO:0000724">
    <property type="term" value="P:double-strand break repair via homologous recombination"/>
    <property type="evidence" value="ECO:0000315"/>
    <property type="project" value="SGD"/>
</dbReference>
<dbReference type="GO" id="GO:0031507">
    <property type="term" value="P:heterochromatin formation"/>
    <property type="evidence" value="ECO:0000315"/>
    <property type="project" value="SGD"/>
</dbReference>
<dbReference type="GO" id="GO:0006606">
    <property type="term" value="P:protein import into nucleus"/>
    <property type="evidence" value="ECO:0000315"/>
    <property type="project" value="SGD"/>
</dbReference>
<dbReference type="GO" id="GO:0000723">
    <property type="term" value="P:telomere maintenance"/>
    <property type="evidence" value="ECO:0000315"/>
    <property type="project" value="SGD"/>
</dbReference>
<dbReference type="GO" id="GO:0010526">
    <property type="term" value="P:transposable element silencing"/>
    <property type="evidence" value="ECO:0000315"/>
    <property type="project" value="SGD"/>
</dbReference>
<dbReference type="GO" id="GO:0032196">
    <property type="term" value="P:transposition"/>
    <property type="evidence" value="ECO:0007669"/>
    <property type="project" value="UniProtKB-KW"/>
</dbReference>
<name>RT105_YEAST</name>
<gene>
    <name type="primary">RTT105</name>
    <name type="ordered locus">YER104W</name>
</gene>
<reference key="1">
    <citation type="journal article" date="1997" name="Nature">
        <title>The nucleotide sequence of Saccharomyces cerevisiae chromosome V.</title>
        <authorList>
            <person name="Dietrich F.S."/>
            <person name="Mulligan J.T."/>
            <person name="Hennessy K.M."/>
            <person name="Yelton M.A."/>
            <person name="Allen E."/>
            <person name="Araujo R."/>
            <person name="Aviles E."/>
            <person name="Berno A."/>
            <person name="Brennan T."/>
            <person name="Carpenter J."/>
            <person name="Chen E."/>
            <person name="Cherry J.M."/>
            <person name="Chung E."/>
            <person name="Duncan M."/>
            <person name="Guzman E."/>
            <person name="Hartzell G."/>
            <person name="Hunicke-Smith S."/>
            <person name="Hyman R.W."/>
            <person name="Kayser A."/>
            <person name="Komp C."/>
            <person name="Lashkari D."/>
            <person name="Lew H."/>
            <person name="Lin D."/>
            <person name="Mosedale D."/>
            <person name="Nakahara K."/>
            <person name="Namath A."/>
            <person name="Norgren R."/>
            <person name="Oefner P."/>
            <person name="Oh C."/>
            <person name="Petel F.X."/>
            <person name="Roberts D."/>
            <person name="Sehl P."/>
            <person name="Schramm S."/>
            <person name="Shogren T."/>
            <person name="Smith V."/>
            <person name="Taylor P."/>
            <person name="Wei Y."/>
            <person name="Botstein D."/>
            <person name="Davis R.W."/>
        </authorList>
    </citation>
    <scope>NUCLEOTIDE SEQUENCE [LARGE SCALE GENOMIC DNA]</scope>
    <source>
        <strain>ATCC 204508 / S288c</strain>
    </source>
</reference>
<reference key="2">
    <citation type="journal article" date="2014" name="G3 (Bethesda)">
        <title>The reference genome sequence of Saccharomyces cerevisiae: Then and now.</title>
        <authorList>
            <person name="Engel S.R."/>
            <person name="Dietrich F.S."/>
            <person name="Fisk D.G."/>
            <person name="Binkley G."/>
            <person name="Balakrishnan R."/>
            <person name="Costanzo M.C."/>
            <person name="Dwight S.S."/>
            <person name="Hitz B.C."/>
            <person name="Karra K."/>
            <person name="Nash R.S."/>
            <person name="Weng S."/>
            <person name="Wong E.D."/>
            <person name="Lloyd P."/>
            <person name="Skrzypek M.S."/>
            <person name="Miyasato S.R."/>
            <person name="Simison M."/>
            <person name="Cherry J.M."/>
        </authorList>
    </citation>
    <scope>GENOME REANNOTATION</scope>
    <source>
        <strain>ATCC 204508 / S288c</strain>
    </source>
</reference>
<reference key="3">
    <citation type="journal article" date="2007" name="Genome Res.">
        <title>Approaching a complete repository of sequence-verified protein-encoding clones for Saccharomyces cerevisiae.</title>
        <authorList>
            <person name="Hu Y."/>
            <person name="Rolfs A."/>
            <person name="Bhullar B."/>
            <person name="Murthy T.V.S."/>
            <person name="Zhu C."/>
            <person name="Berger M.F."/>
            <person name="Camargo A.A."/>
            <person name="Kelley F."/>
            <person name="McCarron S."/>
            <person name="Jepson D."/>
            <person name="Richardson A."/>
            <person name="Raphael J."/>
            <person name="Moreira D."/>
            <person name="Taycher E."/>
            <person name="Zuo D."/>
            <person name="Mohr S."/>
            <person name="Kane M.F."/>
            <person name="Williamson J."/>
            <person name="Simpson A.J.G."/>
            <person name="Bulyk M.L."/>
            <person name="Harlow E."/>
            <person name="Marsischky G."/>
            <person name="Kolodner R.D."/>
            <person name="LaBaer J."/>
        </authorList>
    </citation>
    <scope>NUCLEOTIDE SEQUENCE [GENOMIC DNA]</scope>
    <source>
        <strain>ATCC 204508 / S288c</strain>
    </source>
</reference>
<reference key="4">
    <citation type="journal article" date="2001" name="Genetics">
        <title>Multiple regulators of Ty1 transposition in Saccharomyces cerevisiae have conserved roles in genome maintenance.</title>
        <authorList>
            <person name="Scholes D.T."/>
            <person name="Banerjee M."/>
            <person name="Bowen B."/>
            <person name="Curcio M.J."/>
        </authorList>
    </citation>
    <scope>FUNCTION</scope>
</reference>
<reference key="5">
    <citation type="journal article" date="2003" name="Nature">
        <title>Global analysis of protein localization in budding yeast.</title>
        <authorList>
            <person name="Huh W.-K."/>
            <person name="Falvo J.V."/>
            <person name="Gerke L.C."/>
            <person name="Carroll A.S."/>
            <person name="Howson R.W."/>
            <person name="Weissman J.S."/>
            <person name="O'Shea E.K."/>
        </authorList>
    </citation>
    <scope>SUBCELLULAR LOCATION [LARGE SCALE ANALYSIS]</scope>
</reference>
<reference key="6">
    <citation type="journal article" date="2003" name="Nature">
        <title>Global analysis of protein expression in yeast.</title>
        <authorList>
            <person name="Ghaemmaghami S."/>
            <person name="Huh W.-K."/>
            <person name="Bower K."/>
            <person name="Howson R.W."/>
            <person name="Belle A."/>
            <person name="Dephoure N."/>
            <person name="O'Shea E.K."/>
            <person name="Weissman J.S."/>
        </authorList>
    </citation>
    <scope>LEVEL OF PROTEIN EXPRESSION [LARGE SCALE ANALYSIS]</scope>
</reference>
<reference key="7">
    <citation type="journal article" date="2008" name="Mol. Cell. Proteomics">
        <title>A multidimensional chromatography technology for in-depth phosphoproteome analysis.</title>
        <authorList>
            <person name="Albuquerque C.P."/>
            <person name="Smolka M.B."/>
            <person name="Payne S.H."/>
            <person name="Bafna V."/>
            <person name="Eng J."/>
            <person name="Zhou H."/>
        </authorList>
    </citation>
    <scope>IDENTIFICATION BY MASS SPECTROMETRY [LARGE SCALE ANALYSIS]</scope>
</reference>
<reference key="8">
    <citation type="journal article" date="2009" name="Science">
        <title>Global analysis of Cdk1 substrate phosphorylation sites provides insights into evolution.</title>
        <authorList>
            <person name="Holt L.J."/>
            <person name="Tuch B.B."/>
            <person name="Villen J."/>
            <person name="Johnson A.D."/>
            <person name="Gygi S.P."/>
            <person name="Morgan D.O."/>
        </authorList>
    </citation>
    <scope>IDENTIFICATION BY MASS SPECTROMETRY [LARGE SCALE ANALYSIS]</scope>
</reference>
<feature type="chain" id="PRO_0000202644" description="Regulator of Ty1 transposition protein 105">
    <location>
        <begin position="1"/>
        <end position="208"/>
    </location>
</feature>
<feature type="region of interest" description="Disordered" evidence="1">
    <location>
        <begin position="28"/>
        <end position="105"/>
    </location>
</feature>
<feature type="compositionally biased region" description="Polar residues" evidence="1">
    <location>
        <begin position="33"/>
        <end position="42"/>
    </location>
</feature>
<feature type="compositionally biased region" description="Low complexity" evidence="1">
    <location>
        <begin position="60"/>
        <end position="71"/>
    </location>
</feature>
<feature type="compositionally biased region" description="Basic and acidic residues" evidence="1">
    <location>
        <begin position="94"/>
        <end position="105"/>
    </location>
</feature>
<evidence type="ECO:0000256" key="1">
    <source>
        <dbReference type="SAM" id="MobiDB-lite"/>
    </source>
</evidence>
<evidence type="ECO:0000269" key="2">
    <source>
    </source>
</evidence>
<evidence type="ECO:0000269" key="3">
    <source>
    </source>
</evidence>
<evidence type="ECO:0000269" key="4">
    <source>
    </source>
</evidence>
<keyword id="KW-0963">Cytoplasm</keyword>
<keyword id="KW-0539">Nucleus</keyword>
<keyword id="KW-1185">Reference proteome</keyword>
<keyword id="KW-0815">Transposition</keyword>